<feature type="chain" id="PRO_1000098764" description="Glycerol kinase">
    <location>
        <begin position="1"/>
        <end position="502"/>
    </location>
</feature>
<feature type="binding site" evidence="1">
    <location>
        <position position="14"/>
    </location>
    <ligand>
        <name>ADP</name>
        <dbReference type="ChEBI" id="CHEBI:456216"/>
    </ligand>
</feature>
<feature type="binding site" evidence="1">
    <location>
        <position position="14"/>
    </location>
    <ligand>
        <name>ATP</name>
        <dbReference type="ChEBI" id="CHEBI:30616"/>
    </ligand>
</feature>
<feature type="binding site" evidence="1">
    <location>
        <position position="14"/>
    </location>
    <ligand>
        <name>sn-glycerol 3-phosphate</name>
        <dbReference type="ChEBI" id="CHEBI:57597"/>
    </ligand>
</feature>
<feature type="binding site" evidence="1">
    <location>
        <position position="15"/>
    </location>
    <ligand>
        <name>ATP</name>
        <dbReference type="ChEBI" id="CHEBI:30616"/>
    </ligand>
</feature>
<feature type="binding site" evidence="1">
    <location>
        <position position="16"/>
    </location>
    <ligand>
        <name>ATP</name>
        <dbReference type="ChEBI" id="CHEBI:30616"/>
    </ligand>
</feature>
<feature type="binding site" evidence="1">
    <location>
        <position position="18"/>
    </location>
    <ligand>
        <name>ADP</name>
        <dbReference type="ChEBI" id="CHEBI:456216"/>
    </ligand>
</feature>
<feature type="binding site" evidence="1">
    <location>
        <position position="84"/>
    </location>
    <ligand>
        <name>glycerol</name>
        <dbReference type="ChEBI" id="CHEBI:17754"/>
    </ligand>
</feature>
<feature type="binding site" evidence="1">
    <location>
        <position position="84"/>
    </location>
    <ligand>
        <name>sn-glycerol 3-phosphate</name>
        <dbReference type="ChEBI" id="CHEBI:57597"/>
    </ligand>
</feature>
<feature type="binding site" evidence="1">
    <location>
        <position position="85"/>
    </location>
    <ligand>
        <name>glycerol</name>
        <dbReference type="ChEBI" id="CHEBI:17754"/>
    </ligand>
</feature>
<feature type="binding site" evidence="1">
    <location>
        <position position="85"/>
    </location>
    <ligand>
        <name>sn-glycerol 3-phosphate</name>
        <dbReference type="ChEBI" id="CHEBI:57597"/>
    </ligand>
</feature>
<feature type="binding site" evidence="1">
    <location>
        <position position="136"/>
    </location>
    <ligand>
        <name>glycerol</name>
        <dbReference type="ChEBI" id="CHEBI:17754"/>
    </ligand>
</feature>
<feature type="binding site" evidence="1">
    <location>
        <position position="136"/>
    </location>
    <ligand>
        <name>sn-glycerol 3-phosphate</name>
        <dbReference type="ChEBI" id="CHEBI:57597"/>
    </ligand>
</feature>
<feature type="binding site" evidence="1">
    <location>
        <position position="246"/>
    </location>
    <ligand>
        <name>glycerol</name>
        <dbReference type="ChEBI" id="CHEBI:17754"/>
    </ligand>
</feature>
<feature type="binding site" evidence="1">
    <location>
        <position position="246"/>
    </location>
    <ligand>
        <name>sn-glycerol 3-phosphate</name>
        <dbReference type="ChEBI" id="CHEBI:57597"/>
    </ligand>
</feature>
<feature type="binding site" evidence="1">
    <location>
        <position position="247"/>
    </location>
    <ligand>
        <name>glycerol</name>
        <dbReference type="ChEBI" id="CHEBI:17754"/>
    </ligand>
</feature>
<feature type="binding site" evidence="1">
    <location>
        <position position="268"/>
    </location>
    <ligand>
        <name>ADP</name>
        <dbReference type="ChEBI" id="CHEBI:456216"/>
    </ligand>
</feature>
<feature type="binding site" evidence="1">
    <location>
        <position position="268"/>
    </location>
    <ligand>
        <name>ATP</name>
        <dbReference type="ChEBI" id="CHEBI:30616"/>
    </ligand>
</feature>
<feature type="binding site" evidence="1">
    <location>
        <position position="311"/>
    </location>
    <ligand>
        <name>ADP</name>
        <dbReference type="ChEBI" id="CHEBI:456216"/>
    </ligand>
</feature>
<feature type="binding site" evidence="1">
    <location>
        <position position="311"/>
    </location>
    <ligand>
        <name>ATP</name>
        <dbReference type="ChEBI" id="CHEBI:30616"/>
    </ligand>
</feature>
<feature type="binding site" evidence="1">
    <location>
        <position position="315"/>
    </location>
    <ligand>
        <name>ATP</name>
        <dbReference type="ChEBI" id="CHEBI:30616"/>
    </ligand>
</feature>
<feature type="binding site" evidence="1">
    <location>
        <position position="412"/>
    </location>
    <ligand>
        <name>ADP</name>
        <dbReference type="ChEBI" id="CHEBI:456216"/>
    </ligand>
</feature>
<feature type="binding site" evidence="1">
    <location>
        <position position="412"/>
    </location>
    <ligand>
        <name>ATP</name>
        <dbReference type="ChEBI" id="CHEBI:30616"/>
    </ligand>
</feature>
<feature type="binding site" evidence="1">
    <location>
        <position position="416"/>
    </location>
    <ligand>
        <name>ADP</name>
        <dbReference type="ChEBI" id="CHEBI:456216"/>
    </ligand>
</feature>
<feature type="modified residue" description="Phosphohistidine; by HPr" evidence="1">
    <location>
        <position position="232"/>
    </location>
</feature>
<evidence type="ECO:0000255" key="1">
    <source>
        <dbReference type="HAMAP-Rule" id="MF_00186"/>
    </source>
</evidence>
<comment type="function">
    <text evidence="1">Key enzyme in the regulation of glycerol uptake and metabolism. Catalyzes the phosphorylation of glycerol to yield sn-glycerol 3-phosphate.</text>
</comment>
<comment type="catalytic activity">
    <reaction evidence="1">
        <text>glycerol + ATP = sn-glycerol 3-phosphate + ADP + H(+)</text>
        <dbReference type="Rhea" id="RHEA:21644"/>
        <dbReference type="ChEBI" id="CHEBI:15378"/>
        <dbReference type="ChEBI" id="CHEBI:17754"/>
        <dbReference type="ChEBI" id="CHEBI:30616"/>
        <dbReference type="ChEBI" id="CHEBI:57597"/>
        <dbReference type="ChEBI" id="CHEBI:456216"/>
        <dbReference type="EC" id="2.7.1.30"/>
    </reaction>
</comment>
<comment type="activity regulation">
    <text evidence="1">Activated by phosphorylation and inhibited by fructose 1,6-bisphosphate (FBP).</text>
</comment>
<comment type="pathway">
    <text evidence="1">Polyol metabolism; glycerol degradation via glycerol kinase pathway; sn-glycerol 3-phosphate from glycerol: step 1/1.</text>
</comment>
<comment type="subunit">
    <text evidence="1">Homotetramer and homodimer (in equilibrium).</text>
</comment>
<comment type="PTM">
    <text evidence="1">The phosphoenolpyruvate-dependent sugar phosphotransferase system (PTS), including enzyme I, and histidine-containing protein (HPr) are required for the phosphorylation, which leads to the activation of the enzyme.</text>
</comment>
<comment type="similarity">
    <text evidence="1">Belongs to the FGGY kinase family.</text>
</comment>
<proteinExistence type="inferred from homology"/>
<protein>
    <recommendedName>
        <fullName evidence="1">Glycerol kinase</fullName>
        <ecNumber evidence="1">2.7.1.30</ecNumber>
    </recommendedName>
    <alternativeName>
        <fullName evidence="1">ATP:glycerol 3-phosphotransferase</fullName>
    </alternativeName>
    <alternativeName>
        <fullName evidence="1">Glycerokinase</fullName>
        <shortName evidence="1">GK</shortName>
    </alternativeName>
</protein>
<organism>
    <name type="scientific">Streptococcus pneumoniae serotype 19F (strain G54)</name>
    <dbReference type="NCBI Taxonomy" id="512566"/>
    <lineage>
        <taxon>Bacteria</taxon>
        <taxon>Bacillati</taxon>
        <taxon>Bacillota</taxon>
        <taxon>Bacilli</taxon>
        <taxon>Lactobacillales</taxon>
        <taxon>Streptococcaceae</taxon>
        <taxon>Streptococcus</taxon>
    </lineage>
</organism>
<sequence>MSQEKYIMAIDQGTTSSRAIIFNKKGEKVSSSQKEFTQIFPQAGWVEHNANEIWNSVQSVIAGAFIESGVKPNQIEAIGITNQRETTVVWDKKTGLPIYNAIVWQSRQTAPLAEQLKSQGYVEKFHEKTGLIIDAYFSATKVRWILDHVEDAQERAEKGELLFGTIDTWLVWKLTDGAAHVTDYSNAARTMLYNIKELKWDDEILEILNIPKAILPEVRSNSEIYGKTAPFHFYGGEVPISGMAGDQQAALFGQLAFEPGMVKNTYGTGSFIIMNTGEEMQLSENNLLTTIGYGINGKVYYALEGSIFIAGSAIQWLRDGLRMVENSPESEKYARDSHNNDEVYVVPAFTGLGAPYWNQNARGSVFGLTRGTSKEDFIKATLQSIAYQVRDIIDTMQVDTQTAIQVLKVDGGAAMNNFLMQFQADILGIDIARAKNLETTALGAAFLAGLSVGYWKDLDELKLLNETGELFEPSMNESRKEQLYKGWKKAVKATQVFAEVDD</sequence>
<gene>
    <name evidence="1" type="primary">glpK</name>
    <name type="ordered locus">SPG_2127</name>
</gene>
<keyword id="KW-0067">ATP-binding</keyword>
<keyword id="KW-0319">Glycerol metabolism</keyword>
<keyword id="KW-0418">Kinase</keyword>
<keyword id="KW-0547">Nucleotide-binding</keyword>
<keyword id="KW-0597">Phosphoprotein</keyword>
<keyword id="KW-0808">Transferase</keyword>
<accession>B5E3S7</accession>
<dbReference type="EC" id="2.7.1.30" evidence="1"/>
<dbReference type="EMBL" id="CP001015">
    <property type="protein sequence ID" value="ACF56306.1"/>
    <property type="molecule type" value="Genomic_DNA"/>
</dbReference>
<dbReference type="SMR" id="B5E3S7"/>
<dbReference type="KEGG" id="spx:SPG_2127"/>
<dbReference type="HOGENOM" id="CLU_009281_2_3_9"/>
<dbReference type="UniPathway" id="UPA00618">
    <property type="reaction ID" value="UER00672"/>
</dbReference>
<dbReference type="GO" id="GO:0005829">
    <property type="term" value="C:cytosol"/>
    <property type="evidence" value="ECO:0007669"/>
    <property type="project" value="TreeGrafter"/>
</dbReference>
<dbReference type="GO" id="GO:0005524">
    <property type="term" value="F:ATP binding"/>
    <property type="evidence" value="ECO:0007669"/>
    <property type="project" value="UniProtKB-UniRule"/>
</dbReference>
<dbReference type="GO" id="GO:0004370">
    <property type="term" value="F:glycerol kinase activity"/>
    <property type="evidence" value="ECO:0000250"/>
    <property type="project" value="UniProtKB"/>
</dbReference>
<dbReference type="GO" id="GO:0019563">
    <property type="term" value="P:glycerol catabolic process"/>
    <property type="evidence" value="ECO:0007669"/>
    <property type="project" value="UniProtKB-UniRule"/>
</dbReference>
<dbReference type="GO" id="GO:0006071">
    <property type="term" value="P:glycerol metabolic process"/>
    <property type="evidence" value="ECO:0000250"/>
    <property type="project" value="UniProtKB"/>
</dbReference>
<dbReference type="GO" id="GO:0006072">
    <property type="term" value="P:glycerol-3-phosphate metabolic process"/>
    <property type="evidence" value="ECO:0007669"/>
    <property type="project" value="InterPro"/>
</dbReference>
<dbReference type="CDD" id="cd07786">
    <property type="entry name" value="FGGY_EcGK_like"/>
    <property type="match status" value="1"/>
</dbReference>
<dbReference type="FunFam" id="3.30.420.40:FF:000007">
    <property type="entry name" value="Glycerol kinase"/>
    <property type="match status" value="1"/>
</dbReference>
<dbReference type="FunFam" id="3.30.420.40:FF:000008">
    <property type="entry name" value="Glycerol kinase"/>
    <property type="match status" value="1"/>
</dbReference>
<dbReference type="Gene3D" id="3.30.420.40">
    <property type="match status" value="2"/>
</dbReference>
<dbReference type="HAMAP" id="MF_00186">
    <property type="entry name" value="Glycerol_kin"/>
    <property type="match status" value="1"/>
</dbReference>
<dbReference type="InterPro" id="IPR043129">
    <property type="entry name" value="ATPase_NBD"/>
</dbReference>
<dbReference type="InterPro" id="IPR000577">
    <property type="entry name" value="Carb_kinase_FGGY"/>
</dbReference>
<dbReference type="InterPro" id="IPR018483">
    <property type="entry name" value="Carb_kinase_FGGY_CS"/>
</dbReference>
<dbReference type="InterPro" id="IPR018485">
    <property type="entry name" value="FGGY_C"/>
</dbReference>
<dbReference type="InterPro" id="IPR018484">
    <property type="entry name" value="FGGY_N"/>
</dbReference>
<dbReference type="InterPro" id="IPR005999">
    <property type="entry name" value="Glycerol_kin"/>
</dbReference>
<dbReference type="NCBIfam" id="TIGR01311">
    <property type="entry name" value="glycerol_kin"/>
    <property type="match status" value="1"/>
</dbReference>
<dbReference type="NCBIfam" id="NF000756">
    <property type="entry name" value="PRK00047.1"/>
    <property type="match status" value="1"/>
</dbReference>
<dbReference type="PANTHER" id="PTHR10196:SF69">
    <property type="entry name" value="GLYCEROL KINASE"/>
    <property type="match status" value="1"/>
</dbReference>
<dbReference type="PANTHER" id="PTHR10196">
    <property type="entry name" value="SUGAR KINASE"/>
    <property type="match status" value="1"/>
</dbReference>
<dbReference type="Pfam" id="PF02782">
    <property type="entry name" value="FGGY_C"/>
    <property type="match status" value="1"/>
</dbReference>
<dbReference type="Pfam" id="PF00370">
    <property type="entry name" value="FGGY_N"/>
    <property type="match status" value="1"/>
</dbReference>
<dbReference type="PIRSF" id="PIRSF000538">
    <property type="entry name" value="GlpK"/>
    <property type="match status" value="1"/>
</dbReference>
<dbReference type="SUPFAM" id="SSF53067">
    <property type="entry name" value="Actin-like ATPase domain"/>
    <property type="match status" value="2"/>
</dbReference>
<dbReference type="PROSITE" id="PS00933">
    <property type="entry name" value="FGGY_KINASES_1"/>
    <property type="match status" value="1"/>
</dbReference>
<dbReference type="PROSITE" id="PS00445">
    <property type="entry name" value="FGGY_KINASES_2"/>
    <property type="match status" value="1"/>
</dbReference>
<reference key="1">
    <citation type="journal article" date="2001" name="Microb. Drug Resist.">
        <title>Annotated draft genomic sequence from a Streptococcus pneumoniae type 19F clinical isolate.</title>
        <authorList>
            <person name="Dopazo J."/>
            <person name="Mendoza A."/>
            <person name="Herrero J."/>
            <person name="Caldara F."/>
            <person name="Humbert Y."/>
            <person name="Friedli L."/>
            <person name="Guerrier M."/>
            <person name="Grand-Schenk E."/>
            <person name="Gandin C."/>
            <person name="de Francesco M."/>
            <person name="Polissi A."/>
            <person name="Buell G."/>
            <person name="Feger G."/>
            <person name="Garcia E."/>
            <person name="Peitsch M."/>
            <person name="Garcia-Bustos J.F."/>
        </authorList>
    </citation>
    <scope>NUCLEOTIDE SEQUENCE [LARGE SCALE GENOMIC DNA]</scope>
    <source>
        <strain>G54</strain>
    </source>
</reference>
<reference key="2">
    <citation type="submission" date="2008-03" db="EMBL/GenBank/DDBJ databases">
        <title>Pneumococcal beta glucoside metabolism investigated by whole genome comparison.</title>
        <authorList>
            <person name="Mulas L."/>
            <person name="Trappetti C."/>
            <person name="Hakenbeck R."/>
            <person name="Iannelli F."/>
            <person name="Pozzi G."/>
            <person name="Davidsen T.M."/>
            <person name="Tettelin H."/>
            <person name="Oggioni M."/>
        </authorList>
    </citation>
    <scope>NUCLEOTIDE SEQUENCE [LARGE SCALE GENOMIC DNA]</scope>
    <source>
        <strain>G54</strain>
    </source>
</reference>
<name>GLPK_STRP4</name>